<reference key="1">
    <citation type="journal article" date="2007" name="J. Bacteriol.">
        <title>The complete genome sequence of the lactic acid bacterial paradigm Lactococcus lactis subsp. cremoris MG1363.</title>
        <authorList>
            <person name="Wegmann U."/>
            <person name="O'Connell-Motherway M."/>
            <person name="Zomer A."/>
            <person name="Buist G."/>
            <person name="Shearman C."/>
            <person name="Canchaya C."/>
            <person name="Ventura M."/>
            <person name="Goesmann A."/>
            <person name="Gasson M.J."/>
            <person name="Kuipers O.P."/>
            <person name="van Sinderen D."/>
            <person name="Kok J."/>
        </authorList>
    </citation>
    <scope>NUCLEOTIDE SEQUENCE [LARGE SCALE GENOMIC DNA]</scope>
    <source>
        <strain>MG1363</strain>
    </source>
</reference>
<keyword id="KW-0002">3D-structure</keyword>
<keyword id="KW-0687">Ribonucleoprotein</keyword>
<keyword id="KW-0689">Ribosomal protein</keyword>
<keyword id="KW-0694">RNA-binding</keyword>
<keyword id="KW-0699">rRNA-binding</keyword>
<evidence type="ECO:0000255" key="1">
    <source>
        <dbReference type="HAMAP-Rule" id="MF_01345"/>
    </source>
</evidence>
<evidence type="ECO:0000305" key="2"/>
<name>RS17_LACLM</name>
<feature type="chain" id="PRO_1000054970" description="Small ribosomal subunit protein uS17">
    <location>
        <begin position="1"/>
        <end position="86"/>
    </location>
</feature>
<dbReference type="EMBL" id="AM406671">
    <property type="protein sequence ID" value="CAL98937.1"/>
    <property type="molecule type" value="Genomic_DNA"/>
</dbReference>
<dbReference type="RefSeq" id="WP_003129955.1">
    <property type="nucleotide sequence ID" value="NZ_WJVF01000005.1"/>
</dbReference>
<dbReference type="PDB" id="5MYJ">
    <property type="method" value="EM"/>
    <property type="resolution" value="5.60 A"/>
    <property type="chains" value="AQ=1-86"/>
</dbReference>
<dbReference type="PDBsum" id="5MYJ"/>
<dbReference type="EMDB" id="EMD-3581"/>
<dbReference type="SMR" id="A2RNP6"/>
<dbReference type="STRING" id="416870.llmg_2374"/>
<dbReference type="GeneID" id="89634437"/>
<dbReference type="KEGG" id="llm:llmg_2374"/>
<dbReference type="eggNOG" id="COG0186">
    <property type="taxonomic scope" value="Bacteria"/>
</dbReference>
<dbReference type="HOGENOM" id="CLU_073626_1_0_9"/>
<dbReference type="OrthoDB" id="9811714at2"/>
<dbReference type="PhylomeDB" id="A2RNP6"/>
<dbReference type="Proteomes" id="UP000000364">
    <property type="component" value="Chromosome"/>
</dbReference>
<dbReference type="GO" id="GO:0022627">
    <property type="term" value="C:cytosolic small ribosomal subunit"/>
    <property type="evidence" value="ECO:0007669"/>
    <property type="project" value="TreeGrafter"/>
</dbReference>
<dbReference type="GO" id="GO:0019843">
    <property type="term" value="F:rRNA binding"/>
    <property type="evidence" value="ECO:0007669"/>
    <property type="project" value="UniProtKB-UniRule"/>
</dbReference>
<dbReference type="GO" id="GO:0003735">
    <property type="term" value="F:structural constituent of ribosome"/>
    <property type="evidence" value="ECO:0007669"/>
    <property type="project" value="InterPro"/>
</dbReference>
<dbReference type="GO" id="GO:0006412">
    <property type="term" value="P:translation"/>
    <property type="evidence" value="ECO:0007669"/>
    <property type="project" value="UniProtKB-UniRule"/>
</dbReference>
<dbReference type="CDD" id="cd00364">
    <property type="entry name" value="Ribosomal_uS17"/>
    <property type="match status" value="1"/>
</dbReference>
<dbReference type="FunFam" id="2.40.50.140:FF:000026">
    <property type="entry name" value="30S ribosomal protein S17"/>
    <property type="match status" value="1"/>
</dbReference>
<dbReference type="Gene3D" id="2.40.50.140">
    <property type="entry name" value="Nucleic acid-binding proteins"/>
    <property type="match status" value="1"/>
</dbReference>
<dbReference type="HAMAP" id="MF_01345_B">
    <property type="entry name" value="Ribosomal_uS17_B"/>
    <property type="match status" value="1"/>
</dbReference>
<dbReference type="InterPro" id="IPR012340">
    <property type="entry name" value="NA-bd_OB-fold"/>
</dbReference>
<dbReference type="InterPro" id="IPR000266">
    <property type="entry name" value="Ribosomal_uS17"/>
</dbReference>
<dbReference type="InterPro" id="IPR019984">
    <property type="entry name" value="Ribosomal_uS17_bact/chlr"/>
</dbReference>
<dbReference type="InterPro" id="IPR019979">
    <property type="entry name" value="Ribosomal_uS17_CS"/>
</dbReference>
<dbReference type="NCBIfam" id="NF004123">
    <property type="entry name" value="PRK05610.1"/>
    <property type="match status" value="1"/>
</dbReference>
<dbReference type="NCBIfam" id="TIGR03635">
    <property type="entry name" value="uS17_bact"/>
    <property type="match status" value="1"/>
</dbReference>
<dbReference type="PANTHER" id="PTHR10744">
    <property type="entry name" value="40S RIBOSOMAL PROTEIN S11 FAMILY MEMBER"/>
    <property type="match status" value="1"/>
</dbReference>
<dbReference type="PANTHER" id="PTHR10744:SF1">
    <property type="entry name" value="SMALL RIBOSOMAL SUBUNIT PROTEIN US17M"/>
    <property type="match status" value="1"/>
</dbReference>
<dbReference type="Pfam" id="PF00366">
    <property type="entry name" value="Ribosomal_S17"/>
    <property type="match status" value="1"/>
</dbReference>
<dbReference type="PRINTS" id="PR00973">
    <property type="entry name" value="RIBOSOMALS17"/>
</dbReference>
<dbReference type="SUPFAM" id="SSF50249">
    <property type="entry name" value="Nucleic acid-binding proteins"/>
    <property type="match status" value="1"/>
</dbReference>
<dbReference type="PROSITE" id="PS00056">
    <property type="entry name" value="RIBOSOMAL_S17"/>
    <property type="match status" value="1"/>
</dbReference>
<protein>
    <recommendedName>
        <fullName evidence="1">Small ribosomal subunit protein uS17</fullName>
    </recommendedName>
    <alternativeName>
        <fullName evidence="2">30S ribosomal protein S17</fullName>
    </alternativeName>
</protein>
<gene>
    <name evidence="1" type="primary">rpsQ</name>
    <name type="ordered locus">llmg_2374</name>
</gene>
<comment type="function">
    <text evidence="1">One of the primary rRNA binding proteins, it binds specifically to the 5'-end of 16S ribosomal RNA.</text>
</comment>
<comment type="subunit">
    <text evidence="1">Part of the 30S ribosomal subunit.</text>
</comment>
<comment type="similarity">
    <text evidence="1">Belongs to the universal ribosomal protein uS17 family.</text>
</comment>
<accession>A2RNP6</accession>
<proteinExistence type="evidence at protein level"/>
<sequence length="86" mass="10144">MERKQRKVYQGRVVSDKMDKTITVVVETKRNHPVYGKRINYSKKYKAHDENNSAKTGDIVRIMETRPLSKDKHFRLVEIVEEAVII</sequence>
<organism>
    <name type="scientific">Lactococcus lactis subsp. cremoris (strain MG1363)</name>
    <dbReference type="NCBI Taxonomy" id="416870"/>
    <lineage>
        <taxon>Bacteria</taxon>
        <taxon>Bacillati</taxon>
        <taxon>Bacillota</taxon>
        <taxon>Bacilli</taxon>
        <taxon>Lactobacillales</taxon>
        <taxon>Streptococcaceae</taxon>
        <taxon>Lactococcus</taxon>
        <taxon>Lactococcus cremoris subsp. cremoris</taxon>
    </lineage>
</organism>